<reference key="1">
    <citation type="journal article" date="2010" name="J. Bacteriol.">
        <title>Genome sequence of the deep-rooted Yersinia pestis strain Angola reveals new insights into the evolution and pangenome of the plague bacterium.</title>
        <authorList>
            <person name="Eppinger M."/>
            <person name="Worsham P.L."/>
            <person name="Nikolich M.P."/>
            <person name="Riley D.R."/>
            <person name="Sebastian Y."/>
            <person name="Mou S."/>
            <person name="Achtman M."/>
            <person name="Lindler L.E."/>
            <person name="Ravel J."/>
        </authorList>
    </citation>
    <scope>NUCLEOTIDE SEQUENCE [LARGE SCALE GENOMIC DNA]</scope>
    <source>
        <strain>Angola</strain>
    </source>
</reference>
<accession>A9R670</accession>
<feature type="chain" id="PRO_1000138845" description="Orotate phosphoribosyltransferase">
    <location>
        <begin position="1"/>
        <end position="215"/>
    </location>
</feature>
<feature type="binding site" description="in other chain" evidence="1">
    <location>
        <position position="26"/>
    </location>
    <ligand>
        <name>5-phospho-alpha-D-ribose 1-diphosphate</name>
        <dbReference type="ChEBI" id="CHEBI:58017"/>
        <note>ligand shared between dimeric partners</note>
    </ligand>
</feature>
<feature type="binding site" evidence="1">
    <location>
        <begin position="34"/>
        <end position="35"/>
    </location>
    <ligand>
        <name>orotate</name>
        <dbReference type="ChEBI" id="CHEBI:30839"/>
    </ligand>
</feature>
<feature type="binding site" description="in other chain" evidence="1">
    <location>
        <begin position="72"/>
        <end position="73"/>
    </location>
    <ligand>
        <name>5-phospho-alpha-D-ribose 1-diphosphate</name>
        <dbReference type="ChEBI" id="CHEBI:58017"/>
        <note>ligand shared between dimeric partners</note>
    </ligand>
</feature>
<feature type="binding site" evidence="1">
    <location>
        <position position="99"/>
    </location>
    <ligand>
        <name>5-phospho-alpha-D-ribose 1-diphosphate</name>
        <dbReference type="ChEBI" id="CHEBI:58017"/>
        <note>ligand shared between dimeric partners</note>
    </ligand>
</feature>
<feature type="binding site" description="in other chain" evidence="1">
    <location>
        <position position="100"/>
    </location>
    <ligand>
        <name>5-phospho-alpha-D-ribose 1-diphosphate</name>
        <dbReference type="ChEBI" id="CHEBI:58017"/>
        <note>ligand shared between dimeric partners</note>
    </ligand>
</feature>
<feature type="binding site" evidence="1">
    <location>
        <position position="103"/>
    </location>
    <ligand>
        <name>5-phospho-alpha-D-ribose 1-diphosphate</name>
        <dbReference type="ChEBI" id="CHEBI:58017"/>
        <note>ligand shared between dimeric partners</note>
    </ligand>
</feature>
<feature type="binding site" evidence="1">
    <location>
        <position position="105"/>
    </location>
    <ligand>
        <name>5-phospho-alpha-D-ribose 1-diphosphate</name>
        <dbReference type="ChEBI" id="CHEBI:58017"/>
        <note>ligand shared between dimeric partners</note>
    </ligand>
</feature>
<feature type="binding site" description="in other chain" evidence="1">
    <location>
        <begin position="124"/>
        <end position="132"/>
    </location>
    <ligand>
        <name>5-phospho-alpha-D-ribose 1-diphosphate</name>
        <dbReference type="ChEBI" id="CHEBI:58017"/>
        <note>ligand shared between dimeric partners</note>
    </ligand>
</feature>
<feature type="binding site" evidence="1">
    <location>
        <position position="128"/>
    </location>
    <ligand>
        <name>orotate</name>
        <dbReference type="ChEBI" id="CHEBI:30839"/>
    </ligand>
</feature>
<feature type="binding site" evidence="1">
    <location>
        <position position="156"/>
    </location>
    <ligand>
        <name>orotate</name>
        <dbReference type="ChEBI" id="CHEBI:30839"/>
    </ligand>
</feature>
<keyword id="KW-0328">Glycosyltransferase</keyword>
<keyword id="KW-0460">Magnesium</keyword>
<keyword id="KW-0665">Pyrimidine biosynthesis</keyword>
<keyword id="KW-0808">Transferase</keyword>
<organism>
    <name type="scientific">Yersinia pestis bv. Antiqua (strain Angola)</name>
    <dbReference type="NCBI Taxonomy" id="349746"/>
    <lineage>
        <taxon>Bacteria</taxon>
        <taxon>Pseudomonadati</taxon>
        <taxon>Pseudomonadota</taxon>
        <taxon>Gammaproteobacteria</taxon>
        <taxon>Enterobacterales</taxon>
        <taxon>Yersiniaceae</taxon>
        <taxon>Yersinia</taxon>
    </lineage>
</organism>
<evidence type="ECO:0000255" key="1">
    <source>
        <dbReference type="HAMAP-Rule" id="MF_01208"/>
    </source>
</evidence>
<gene>
    <name evidence="1" type="primary">pyrE</name>
    <name type="ordered locus">YpAngola_A0051</name>
</gene>
<protein>
    <recommendedName>
        <fullName evidence="1">Orotate phosphoribosyltransferase</fullName>
        <shortName evidence="1">OPRT</shortName>
        <shortName evidence="1">OPRTase</shortName>
        <ecNumber evidence="1">2.4.2.10</ecNumber>
    </recommendedName>
</protein>
<proteinExistence type="inferred from homology"/>
<comment type="function">
    <text evidence="1">Catalyzes the transfer of a ribosyl phosphate group from 5-phosphoribose 1-diphosphate to orotate, leading to the formation of orotidine monophosphate (OMP).</text>
</comment>
<comment type="catalytic activity">
    <reaction evidence="1">
        <text>orotidine 5'-phosphate + diphosphate = orotate + 5-phospho-alpha-D-ribose 1-diphosphate</text>
        <dbReference type="Rhea" id="RHEA:10380"/>
        <dbReference type="ChEBI" id="CHEBI:30839"/>
        <dbReference type="ChEBI" id="CHEBI:33019"/>
        <dbReference type="ChEBI" id="CHEBI:57538"/>
        <dbReference type="ChEBI" id="CHEBI:58017"/>
        <dbReference type="EC" id="2.4.2.10"/>
    </reaction>
</comment>
<comment type="cofactor">
    <cofactor evidence="1">
        <name>Mg(2+)</name>
        <dbReference type="ChEBI" id="CHEBI:18420"/>
    </cofactor>
</comment>
<comment type="pathway">
    <text evidence="1">Pyrimidine metabolism; UMP biosynthesis via de novo pathway; UMP from orotate: step 1/2.</text>
</comment>
<comment type="subunit">
    <text evidence="1">Homodimer.</text>
</comment>
<comment type="similarity">
    <text evidence="1">Belongs to the purine/pyrimidine phosphoribosyltransferase family. PyrE subfamily.</text>
</comment>
<name>PYRE_YERPG</name>
<dbReference type="EC" id="2.4.2.10" evidence="1"/>
<dbReference type="EMBL" id="CP000901">
    <property type="protein sequence ID" value="ABX87243.1"/>
    <property type="molecule type" value="Genomic_DNA"/>
</dbReference>
<dbReference type="RefSeq" id="WP_002208996.1">
    <property type="nucleotide sequence ID" value="NZ_CP009935.1"/>
</dbReference>
<dbReference type="SMR" id="A9R670"/>
<dbReference type="GeneID" id="57974545"/>
<dbReference type="KEGG" id="ypg:YpAngola_A0051"/>
<dbReference type="PATRIC" id="fig|349746.12.peg.994"/>
<dbReference type="UniPathway" id="UPA00070">
    <property type="reaction ID" value="UER00119"/>
</dbReference>
<dbReference type="GO" id="GO:0005737">
    <property type="term" value="C:cytoplasm"/>
    <property type="evidence" value="ECO:0007669"/>
    <property type="project" value="TreeGrafter"/>
</dbReference>
<dbReference type="GO" id="GO:0000287">
    <property type="term" value="F:magnesium ion binding"/>
    <property type="evidence" value="ECO:0007669"/>
    <property type="project" value="UniProtKB-UniRule"/>
</dbReference>
<dbReference type="GO" id="GO:0004588">
    <property type="term" value="F:orotate phosphoribosyltransferase activity"/>
    <property type="evidence" value="ECO:0007669"/>
    <property type="project" value="UniProtKB-UniRule"/>
</dbReference>
<dbReference type="GO" id="GO:0006207">
    <property type="term" value="P:'de novo' pyrimidine nucleobase biosynthetic process"/>
    <property type="evidence" value="ECO:0007669"/>
    <property type="project" value="TreeGrafter"/>
</dbReference>
<dbReference type="GO" id="GO:0044205">
    <property type="term" value="P:'de novo' UMP biosynthetic process"/>
    <property type="evidence" value="ECO:0007669"/>
    <property type="project" value="UniProtKB-UniRule"/>
</dbReference>
<dbReference type="GO" id="GO:0046132">
    <property type="term" value="P:pyrimidine ribonucleoside biosynthetic process"/>
    <property type="evidence" value="ECO:0007669"/>
    <property type="project" value="TreeGrafter"/>
</dbReference>
<dbReference type="CDD" id="cd06223">
    <property type="entry name" value="PRTases_typeI"/>
    <property type="match status" value="1"/>
</dbReference>
<dbReference type="FunFam" id="3.40.50.2020:FF:000008">
    <property type="entry name" value="Orotate phosphoribosyltransferase"/>
    <property type="match status" value="1"/>
</dbReference>
<dbReference type="Gene3D" id="3.40.50.2020">
    <property type="match status" value="1"/>
</dbReference>
<dbReference type="HAMAP" id="MF_01208">
    <property type="entry name" value="PyrE"/>
    <property type="match status" value="1"/>
</dbReference>
<dbReference type="InterPro" id="IPR023031">
    <property type="entry name" value="OPRT"/>
</dbReference>
<dbReference type="InterPro" id="IPR004467">
    <property type="entry name" value="Or_phspho_trans_dom"/>
</dbReference>
<dbReference type="InterPro" id="IPR000836">
    <property type="entry name" value="PRibTrfase_dom"/>
</dbReference>
<dbReference type="InterPro" id="IPR029057">
    <property type="entry name" value="PRTase-like"/>
</dbReference>
<dbReference type="NCBIfam" id="TIGR00336">
    <property type="entry name" value="pyrE"/>
    <property type="match status" value="1"/>
</dbReference>
<dbReference type="PANTHER" id="PTHR46683">
    <property type="entry name" value="OROTATE PHOSPHORIBOSYLTRANSFERASE 1-RELATED"/>
    <property type="match status" value="1"/>
</dbReference>
<dbReference type="PANTHER" id="PTHR46683:SF1">
    <property type="entry name" value="OROTATE PHOSPHORIBOSYLTRANSFERASE 1-RELATED"/>
    <property type="match status" value="1"/>
</dbReference>
<dbReference type="Pfam" id="PF00156">
    <property type="entry name" value="Pribosyltran"/>
    <property type="match status" value="1"/>
</dbReference>
<dbReference type="SUPFAM" id="SSF53271">
    <property type="entry name" value="PRTase-like"/>
    <property type="match status" value="1"/>
</dbReference>
<dbReference type="PROSITE" id="PS00103">
    <property type="entry name" value="PUR_PYR_PR_TRANSFER"/>
    <property type="match status" value="1"/>
</dbReference>
<sequence length="215" mass="23954">MKAYQREFIEFALNKQVLKFGEFTLKSGRISPYFFNAGLFNTGLDLAKLGRFYAAALMDCGVEFDLLFGPAYKGIPIATTTAVALAEHHERDVPYCFNRKEAKTHGEGGNLVGSPLQGRVMLVDDVITAGTAIRESMEIINAQGATLAGVMISLDRQERGRGEISAIQEVERDYHCKVIAIVTLNDVIRYLEDKPEMAEHLVAVRQYREQYGVTL</sequence>